<keyword id="KW-0108">Calcium channel impairing toxin</keyword>
<keyword id="KW-1015">Disulfide bond</keyword>
<keyword id="KW-0872">Ion channel impairing toxin</keyword>
<keyword id="KW-0528">Neurotoxin</keyword>
<keyword id="KW-1219">Ryanodine-sensitive calcium-release channel impairing toxin</keyword>
<keyword id="KW-0964">Secreted</keyword>
<keyword id="KW-0732">Signal</keyword>
<keyword id="KW-0800">Toxin</keyword>
<feature type="signal peptide" evidence="1">
    <location>
        <begin position="1"/>
        <end position="19"/>
    </location>
</feature>
<feature type="chain" id="PRO_0000006289" description="Cysteine-rich venom protein">
    <location>
        <begin position="20"/>
        <end position="240"/>
    </location>
</feature>
<feature type="domain" description="SCP">
    <location>
        <begin position="39"/>
        <end position="166"/>
    </location>
</feature>
<feature type="domain" description="ShKT" evidence="2">
    <location>
        <begin position="202"/>
        <end position="235"/>
    </location>
</feature>
<feature type="disulfide bond" evidence="2">
    <location>
        <begin position="75"/>
        <end position="153"/>
    </location>
</feature>
<feature type="disulfide bond" evidence="2">
    <location>
        <begin position="92"/>
        <end position="167"/>
    </location>
</feature>
<feature type="disulfide bond" evidence="2">
    <location>
        <begin position="148"/>
        <end position="164"/>
    </location>
</feature>
<feature type="disulfide bond" evidence="2">
    <location>
        <begin position="186"/>
        <end position="193"/>
    </location>
</feature>
<feature type="disulfide bond" evidence="2">
    <location>
        <begin position="189"/>
        <end position="198"/>
    </location>
</feature>
<feature type="disulfide bond" evidence="2">
    <location>
        <begin position="202"/>
        <end position="235"/>
    </location>
</feature>
<feature type="disulfide bond" evidence="2">
    <location>
        <begin position="211"/>
        <end position="229"/>
    </location>
</feature>
<feature type="disulfide bond" evidence="2">
    <location>
        <begin position="220"/>
        <end position="233"/>
    </location>
</feature>
<dbReference type="EMBL" id="U59447">
    <property type="protein sequence ID" value="AAB48565.1"/>
    <property type="status" value="ALT_INIT"/>
    <property type="molecule type" value="mRNA"/>
</dbReference>
<dbReference type="SMR" id="P79845"/>
<dbReference type="GO" id="GO:0005576">
    <property type="term" value="C:extracellular region"/>
    <property type="evidence" value="ECO:0007669"/>
    <property type="project" value="UniProtKB-SubCell"/>
</dbReference>
<dbReference type="GO" id="GO:0005246">
    <property type="term" value="F:calcium channel regulator activity"/>
    <property type="evidence" value="ECO:0007669"/>
    <property type="project" value="UniProtKB-KW"/>
</dbReference>
<dbReference type="GO" id="GO:0090729">
    <property type="term" value="F:toxin activity"/>
    <property type="evidence" value="ECO:0007669"/>
    <property type="project" value="UniProtKB-KW"/>
</dbReference>
<dbReference type="CDD" id="cd05383">
    <property type="entry name" value="CAP_CRISP"/>
    <property type="match status" value="1"/>
</dbReference>
<dbReference type="FunFam" id="1.10.10.740:FF:000001">
    <property type="entry name" value="Cysteine-rich secretory protein 2"/>
    <property type="match status" value="1"/>
</dbReference>
<dbReference type="FunFam" id="3.40.33.10:FF:000005">
    <property type="entry name" value="Cysteine-rich secretory protein 2"/>
    <property type="match status" value="1"/>
</dbReference>
<dbReference type="Gene3D" id="3.40.33.10">
    <property type="entry name" value="CAP"/>
    <property type="match status" value="1"/>
</dbReference>
<dbReference type="Gene3D" id="1.10.10.740">
    <property type="entry name" value="Crisp domain"/>
    <property type="match status" value="1"/>
</dbReference>
<dbReference type="InterPro" id="IPR018244">
    <property type="entry name" value="Allrgn_V5/Tpx1_CS"/>
</dbReference>
<dbReference type="InterPro" id="IPR014044">
    <property type="entry name" value="CAP_dom"/>
</dbReference>
<dbReference type="InterPro" id="IPR035940">
    <property type="entry name" value="CAP_sf"/>
</dbReference>
<dbReference type="InterPro" id="IPR042076">
    <property type="entry name" value="Crisp-like_dom"/>
</dbReference>
<dbReference type="InterPro" id="IPR001283">
    <property type="entry name" value="CRISP-related"/>
</dbReference>
<dbReference type="InterPro" id="IPR013871">
    <property type="entry name" value="Cysteine_rich_secretory"/>
</dbReference>
<dbReference type="InterPro" id="IPR034117">
    <property type="entry name" value="SCP_CRISP"/>
</dbReference>
<dbReference type="InterPro" id="IPR003582">
    <property type="entry name" value="ShKT_dom"/>
</dbReference>
<dbReference type="InterPro" id="IPR002413">
    <property type="entry name" value="V5_allergen-like"/>
</dbReference>
<dbReference type="PANTHER" id="PTHR10334">
    <property type="entry name" value="CYSTEINE-RICH SECRETORY PROTEIN-RELATED"/>
    <property type="match status" value="1"/>
</dbReference>
<dbReference type="Pfam" id="PF00188">
    <property type="entry name" value="CAP"/>
    <property type="match status" value="1"/>
</dbReference>
<dbReference type="Pfam" id="PF08562">
    <property type="entry name" value="Crisp"/>
    <property type="match status" value="1"/>
</dbReference>
<dbReference type="PRINTS" id="PR00838">
    <property type="entry name" value="V5ALLERGEN"/>
</dbReference>
<dbReference type="PRINTS" id="PR00837">
    <property type="entry name" value="V5TPXLIKE"/>
</dbReference>
<dbReference type="SMART" id="SM00198">
    <property type="entry name" value="SCP"/>
    <property type="match status" value="1"/>
</dbReference>
<dbReference type="SUPFAM" id="SSF57546">
    <property type="entry name" value="Crisp domain-like"/>
    <property type="match status" value="1"/>
</dbReference>
<dbReference type="SUPFAM" id="SSF55797">
    <property type="entry name" value="PR-1-like"/>
    <property type="match status" value="1"/>
</dbReference>
<dbReference type="PROSITE" id="PS01009">
    <property type="entry name" value="CRISP_1"/>
    <property type="match status" value="1"/>
</dbReference>
<dbReference type="PROSITE" id="PS01010">
    <property type="entry name" value="CRISP_2"/>
    <property type="match status" value="1"/>
</dbReference>
<dbReference type="PROSITE" id="PS51670">
    <property type="entry name" value="SHKT"/>
    <property type="match status" value="1"/>
</dbReference>
<name>CRVP_PROMU</name>
<reference key="1">
    <citation type="journal article" date="1997" name="Toxicon">
        <title>Cloning and expression of a cysteine-rich venom protein from Trimeresurus mucrosquamatus (Taiwan habu).</title>
        <authorList>
            <person name="Chang T.-Y."/>
            <person name="Mao S.-H."/>
            <person name="Guo Y.-W."/>
        </authorList>
    </citation>
    <scope>NUCLEOTIDE SEQUENCE [MRNA]</scope>
    <source>
        <tissue>Venom gland</tissue>
    </source>
</reference>
<protein>
    <recommendedName>
        <fullName>Cysteine-rich venom protein</fullName>
        <shortName>TM-CRVP</shortName>
    </recommendedName>
</protein>
<accession>P79845</accession>
<sequence length="240" mass="26688">MIAFIVLPILAAVLHQSSGNVDFDSESPRKPEIQNEIIDLHNSLRRSVNPTASNMLKMEWYPEAAANAERWAYRCIESHSSRDSRVIGGIKCGENIYMSPYPAKWTDIIHAWHGEYKDFKYGVGAVPSNAATGHYTQIVWYKSYRGGCAAAYCPSSKYRYFYVCQYCPAGNMIGKTATPYTSGPPCGDCPSDCDNGLCTNPCTQENTYSNCNSLVQQSSCQDNNMKTKCPASCFCQNKII</sequence>
<organism>
    <name type="scientific">Protobothrops mucrosquamatus</name>
    <name type="common">Taiwan habu</name>
    <name type="synonym">Trimeresurus mucrosquamatus</name>
    <dbReference type="NCBI Taxonomy" id="103944"/>
    <lineage>
        <taxon>Eukaryota</taxon>
        <taxon>Metazoa</taxon>
        <taxon>Chordata</taxon>
        <taxon>Craniata</taxon>
        <taxon>Vertebrata</taxon>
        <taxon>Euteleostomi</taxon>
        <taxon>Lepidosauria</taxon>
        <taxon>Squamata</taxon>
        <taxon>Bifurcata</taxon>
        <taxon>Unidentata</taxon>
        <taxon>Episquamata</taxon>
        <taxon>Toxicofera</taxon>
        <taxon>Serpentes</taxon>
        <taxon>Colubroidea</taxon>
        <taxon>Viperidae</taxon>
        <taxon>Crotalinae</taxon>
        <taxon>Protobothrops</taxon>
    </lineage>
</organism>
<proteinExistence type="evidence at transcript level"/>
<comment type="function">
    <text>May block ryanodine receptors (RYR).</text>
</comment>
<comment type="subcellular location">
    <subcellularLocation>
        <location>Secreted</location>
    </subcellularLocation>
</comment>
<comment type="tissue specificity">
    <text>Expressed by the venom gland.</text>
</comment>
<comment type="similarity">
    <text evidence="3">Belongs to the CRISP family.</text>
</comment>
<comment type="sequence caution" evidence="3">
    <conflict type="erroneous initiation">
        <sequence resource="EMBL-CDS" id="AAB48565"/>
    </conflict>
    <text>Truncated N-terminus.</text>
</comment>
<evidence type="ECO:0000250" key="1"/>
<evidence type="ECO:0000255" key="2">
    <source>
        <dbReference type="PROSITE-ProRule" id="PRU01005"/>
    </source>
</evidence>
<evidence type="ECO:0000305" key="3"/>